<accession>Q569K6</accession>
<accession>Q0VD76</accession>
<accession>Q9BYA4</accession>
<sequence length="752" mass="83941">MAHLLGSQACMESLRTDLTDLQGAIVDVFSRAGPVRFPSWKFPDRMACDLDMVALLEHYDHVPGDPEFTQLSHAVLLELVIDRLLLLLQSCMSYLENLGSEQMMPPAQAAGPCMSVGLTVRRFWDSLLRLGTLHQQPLPQKGANQRETPTSKPTTKGEPARSPEYLTTKLIKPSSPVLGLPQTCQEPESIPVRASLQFPATTFKNTRSVHSQTIETALVPCDACASVQGSLQKVGKVVISLCQSQNLPSSLGQFQQLVQDSMGLRPLPAATVGRWAAEQRKDLTRLSKHVEALRAQLEEAEGQKDGLRKQAGKLEQALKQEQGARRRQAEEDEQCLSEWEHDKQQLLTETSDLKTKMATLERELKQQRESTQAVEAKAQQLQEEGERRAAAERQVQQLEEQVQQLEAQVQLLVGRLEGAGQQVCWASTELDKEKARVDSMVRHQESLQAKQRALLKQLDSLDQEREELRGSLDEAEAQRARVEEQLQSEREQGQCQLRAQQELLQSLQREKQGLEQATTDLRLTILELERELEELKERERLLVAFPDLHRPTETQIHGGRSSSVESQITCPTDSGNVTDHMERQVQSNDIRIRVLQEENGRLQSMLSKIREVAQQGGLKLIPQDRLWSPSSKGTQGATPPVQAKSTSPGPLGRQHLPSSRTGRTLLGQPCTSPPRQPCTSPPRQPCTSPPRQPCTSPSRQPCSQPSKSLLEGVTHLDTCTQNPIKVLVRLRKRLSPGRGQASSAHQPQERPM</sequence>
<feature type="chain" id="PRO_0000319420" description="Coiled-coil domain-containing protein 157">
    <location>
        <begin position="1"/>
        <end position="752"/>
    </location>
</feature>
<feature type="region of interest" description="Disordered" evidence="2">
    <location>
        <begin position="135"/>
        <end position="163"/>
    </location>
</feature>
<feature type="region of interest" description="Disordered" evidence="2">
    <location>
        <begin position="316"/>
        <end position="336"/>
    </location>
</feature>
<feature type="region of interest" description="Disordered" evidence="2">
    <location>
        <begin position="620"/>
        <end position="707"/>
    </location>
</feature>
<feature type="region of interest" description="Disordered" evidence="2">
    <location>
        <begin position="731"/>
        <end position="752"/>
    </location>
</feature>
<feature type="coiled-coil region" evidence="1">
    <location>
        <begin position="276"/>
        <end position="544"/>
    </location>
</feature>
<feature type="coiled-coil region" evidence="1">
    <location>
        <begin position="579"/>
        <end position="615"/>
    </location>
</feature>
<feature type="compositionally biased region" description="Polar residues" evidence="2">
    <location>
        <begin position="135"/>
        <end position="154"/>
    </location>
</feature>
<feature type="compositionally biased region" description="Basic and acidic residues" evidence="2">
    <location>
        <begin position="316"/>
        <end position="329"/>
    </location>
</feature>
<feature type="compositionally biased region" description="Polar residues" evidence="2">
    <location>
        <begin position="628"/>
        <end position="648"/>
    </location>
</feature>
<feature type="compositionally biased region" description="Pro residues" evidence="2">
    <location>
        <begin position="671"/>
        <end position="692"/>
    </location>
</feature>
<feature type="compositionally biased region" description="Polar residues" evidence="2">
    <location>
        <begin position="693"/>
        <end position="707"/>
    </location>
</feature>
<feature type="sequence variant" id="VAR_060124" description="In dbSNP:rs740223.">
    <original>D</original>
    <variation>N</variation>
    <location>
        <position position="51"/>
    </location>
</feature>
<feature type="sequence variant" id="VAR_038999" description="In dbSNP:rs12167903.">
    <original>P</original>
    <variation>L</variation>
    <location>
        <position position="191"/>
    </location>
</feature>
<feature type="sequence variant" id="VAR_039000" description="In dbSNP:rs2015035.">
    <original>S</original>
    <variation>A</variation>
    <location>
        <position position="587"/>
    </location>
</feature>
<feature type="sequence conflict" description="In Ref. 2; AAH92419/AAI19800/AAI27256." evidence="3" ref="2">
    <original>T</original>
    <variation>A</variation>
    <location>
        <position position="16"/>
    </location>
</feature>
<name>CC157_HUMAN</name>
<proteinExistence type="evidence at protein level"/>
<dbReference type="EMBL" id="AC004997">
    <property type="status" value="NOT_ANNOTATED_CDS"/>
    <property type="molecule type" value="Genomic_DNA"/>
</dbReference>
<dbReference type="EMBL" id="BC092419">
    <property type="protein sequence ID" value="AAH92419.1"/>
    <property type="status" value="ALT_INIT"/>
    <property type="molecule type" value="mRNA"/>
</dbReference>
<dbReference type="EMBL" id="BC119799">
    <property type="protein sequence ID" value="AAI19800.1"/>
    <property type="molecule type" value="mRNA"/>
</dbReference>
<dbReference type="EMBL" id="BC127255">
    <property type="protein sequence ID" value="AAI27256.1"/>
    <property type="molecule type" value="mRNA"/>
</dbReference>
<dbReference type="EMBL" id="AB051443">
    <property type="protein sequence ID" value="BAB33326.1"/>
    <property type="status" value="ALT_SEQ"/>
    <property type="molecule type" value="mRNA"/>
</dbReference>
<dbReference type="CCDS" id="CCDS33632.2"/>
<dbReference type="RefSeq" id="NP_001017437.3">
    <property type="nucleotide sequence ID" value="NM_001017437.5"/>
</dbReference>
<dbReference type="RefSeq" id="NP_001305263.2">
    <property type="nucleotide sequence ID" value="NM_001318334.2"/>
</dbReference>
<dbReference type="SMR" id="Q569K6"/>
<dbReference type="BioGRID" id="139247">
    <property type="interactions" value="6"/>
</dbReference>
<dbReference type="FunCoup" id="Q569K6">
    <property type="interactions" value="130"/>
</dbReference>
<dbReference type="IntAct" id="Q569K6">
    <property type="interactions" value="2"/>
</dbReference>
<dbReference type="STRING" id="9606.ENSP00000385357"/>
<dbReference type="iPTMnet" id="Q569K6"/>
<dbReference type="PhosphoSitePlus" id="Q569K6"/>
<dbReference type="BioMuta" id="CCDC157"/>
<dbReference type="DMDM" id="296439417"/>
<dbReference type="jPOST" id="Q569K6"/>
<dbReference type="MassIVE" id="Q569K6"/>
<dbReference type="PaxDb" id="9606-ENSP00000385357"/>
<dbReference type="PeptideAtlas" id="Q569K6"/>
<dbReference type="ProteomicsDB" id="62579"/>
<dbReference type="Antibodypedia" id="45362">
    <property type="antibodies" value="35 antibodies from 12 providers"/>
</dbReference>
<dbReference type="DNASU" id="550631"/>
<dbReference type="Ensembl" id="ENST00000338306.8">
    <property type="protein sequence ID" value="ENSP00000343087.3"/>
    <property type="gene ID" value="ENSG00000187860.11"/>
</dbReference>
<dbReference type="Ensembl" id="ENST00000405659.5">
    <property type="protein sequence ID" value="ENSP00000385357.1"/>
    <property type="gene ID" value="ENSG00000187860.11"/>
</dbReference>
<dbReference type="GeneID" id="550631"/>
<dbReference type="KEGG" id="hsa:550631"/>
<dbReference type="MANE-Select" id="ENST00000338306.8">
    <property type="protein sequence ID" value="ENSP00000343087.3"/>
    <property type="RefSeq nucleotide sequence ID" value="NM_001017437.5"/>
    <property type="RefSeq protein sequence ID" value="NP_001017437.3"/>
</dbReference>
<dbReference type="UCSC" id="uc011aku.3">
    <property type="organism name" value="human"/>
</dbReference>
<dbReference type="AGR" id="HGNC:33854"/>
<dbReference type="CTD" id="550631"/>
<dbReference type="DisGeNET" id="550631"/>
<dbReference type="GeneCards" id="CCDC157"/>
<dbReference type="HGNC" id="HGNC:33854">
    <property type="gene designation" value="CCDC157"/>
</dbReference>
<dbReference type="HPA" id="ENSG00000187860">
    <property type="expression patterns" value="Tissue enhanced (testis)"/>
</dbReference>
<dbReference type="MIM" id="619391">
    <property type="type" value="gene"/>
</dbReference>
<dbReference type="neXtProt" id="NX_Q569K6"/>
<dbReference type="PharmGKB" id="PA164717678"/>
<dbReference type="VEuPathDB" id="HostDB:ENSG00000187860"/>
<dbReference type="eggNOG" id="ENOG502QPW2">
    <property type="taxonomic scope" value="Eukaryota"/>
</dbReference>
<dbReference type="GeneTree" id="ENSGT00390000013684"/>
<dbReference type="HOGENOM" id="CLU_019717_2_0_1"/>
<dbReference type="InParanoid" id="Q569K6"/>
<dbReference type="OMA" id="QDQLWSP"/>
<dbReference type="OrthoDB" id="10051906at2759"/>
<dbReference type="PAN-GO" id="Q569K6">
    <property type="GO annotations" value="0 GO annotations based on evolutionary models"/>
</dbReference>
<dbReference type="PhylomeDB" id="Q569K6"/>
<dbReference type="TreeFam" id="TF334443"/>
<dbReference type="PathwayCommons" id="Q569K6"/>
<dbReference type="SignaLink" id="Q569K6"/>
<dbReference type="BioGRID-ORCS" id="550631">
    <property type="hits" value="12 hits in 1151 CRISPR screens"/>
</dbReference>
<dbReference type="ChiTaRS" id="CCDC157">
    <property type="organism name" value="human"/>
</dbReference>
<dbReference type="GenomeRNAi" id="550631"/>
<dbReference type="Pharos" id="Q569K6">
    <property type="development level" value="Tdark"/>
</dbReference>
<dbReference type="PRO" id="PR:Q569K6"/>
<dbReference type="Proteomes" id="UP000005640">
    <property type="component" value="Chromosome 22"/>
</dbReference>
<dbReference type="RNAct" id="Q569K6">
    <property type="molecule type" value="protein"/>
</dbReference>
<dbReference type="Bgee" id="ENSG00000187860">
    <property type="expression patterns" value="Expressed in right uterine tube and 109 other cell types or tissues"/>
</dbReference>
<dbReference type="ExpressionAtlas" id="Q569K6">
    <property type="expression patterns" value="baseline and differential"/>
</dbReference>
<dbReference type="InterPro" id="IPR029681">
    <property type="entry name" value="CCDC157"/>
</dbReference>
<dbReference type="PANTHER" id="PTHR43696">
    <property type="entry name" value="COILED-COIL DOMAIN-CONTAINING PROTEIN 157"/>
    <property type="match status" value="1"/>
</dbReference>
<dbReference type="PANTHER" id="PTHR43696:SF9">
    <property type="entry name" value="COILED-COIL DOMAIN-CONTAINING PROTEIN 157"/>
    <property type="match status" value="1"/>
</dbReference>
<organism>
    <name type="scientific">Homo sapiens</name>
    <name type="common">Human</name>
    <dbReference type="NCBI Taxonomy" id="9606"/>
    <lineage>
        <taxon>Eukaryota</taxon>
        <taxon>Metazoa</taxon>
        <taxon>Chordata</taxon>
        <taxon>Craniata</taxon>
        <taxon>Vertebrata</taxon>
        <taxon>Euteleostomi</taxon>
        <taxon>Mammalia</taxon>
        <taxon>Eutheria</taxon>
        <taxon>Euarchontoglires</taxon>
        <taxon>Primates</taxon>
        <taxon>Haplorrhini</taxon>
        <taxon>Catarrhini</taxon>
        <taxon>Hominidae</taxon>
        <taxon>Homo</taxon>
    </lineage>
</organism>
<evidence type="ECO:0000255" key="1"/>
<evidence type="ECO:0000256" key="2">
    <source>
        <dbReference type="SAM" id="MobiDB-lite"/>
    </source>
</evidence>
<evidence type="ECO:0000305" key="3"/>
<reference key="1">
    <citation type="journal article" date="1999" name="Nature">
        <title>The DNA sequence of human chromosome 22.</title>
        <authorList>
            <person name="Dunham I."/>
            <person name="Hunt A.R."/>
            <person name="Collins J.E."/>
            <person name="Bruskiewich R."/>
            <person name="Beare D.M."/>
            <person name="Clamp M."/>
            <person name="Smink L.J."/>
            <person name="Ainscough R."/>
            <person name="Almeida J.P."/>
            <person name="Babbage A.K."/>
            <person name="Bagguley C."/>
            <person name="Bailey J."/>
            <person name="Barlow K.F."/>
            <person name="Bates K.N."/>
            <person name="Beasley O.P."/>
            <person name="Bird C.P."/>
            <person name="Blakey S.E."/>
            <person name="Bridgeman A.M."/>
            <person name="Buck D."/>
            <person name="Burgess J."/>
            <person name="Burrill W.D."/>
            <person name="Burton J."/>
            <person name="Carder C."/>
            <person name="Carter N.P."/>
            <person name="Chen Y."/>
            <person name="Clark G."/>
            <person name="Clegg S.M."/>
            <person name="Cobley V.E."/>
            <person name="Cole C.G."/>
            <person name="Collier R.E."/>
            <person name="Connor R."/>
            <person name="Conroy D."/>
            <person name="Corby N.R."/>
            <person name="Coville G.J."/>
            <person name="Cox A.V."/>
            <person name="Davis J."/>
            <person name="Dawson E."/>
            <person name="Dhami P.D."/>
            <person name="Dockree C."/>
            <person name="Dodsworth S.J."/>
            <person name="Durbin R.M."/>
            <person name="Ellington A.G."/>
            <person name="Evans K.L."/>
            <person name="Fey J.M."/>
            <person name="Fleming K."/>
            <person name="French L."/>
            <person name="Garner A.A."/>
            <person name="Gilbert J.G.R."/>
            <person name="Goward M.E."/>
            <person name="Grafham D.V."/>
            <person name="Griffiths M.N.D."/>
            <person name="Hall C."/>
            <person name="Hall R.E."/>
            <person name="Hall-Tamlyn G."/>
            <person name="Heathcott R.W."/>
            <person name="Ho S."/>
            <person name="Holmes S."/>
            <person name="Hunt S.E."/>
            <person name="Jones M.C."/>
            <person name="Kershaw J."/>
            <person name="Kimberley A.M."/>
            <person name="King A."/>
            <person name="Laird G.K."/>
            <person name="Langford C.F."/>
            <person name="Leversha M.A."/>
            <person name="Lloyd C."/>
            <person name="Lloyd D.M."/>
            <person name="Martyn I.D."/>
            <person name="Mashreghi-Mohammadi M."/>
            <person name="Matthews L.H."/>
            <person name="Mccann O.T."/>
            <person name="Mcclay J."/>
            <person name="Mclaren S."/>
            <person name="McMurray A.A."/>
            <person name="Milne S.A."/>
            <person name="Mortimore B.J."/>
            <person name="Odell C.N."/>
            <person name="Pavitt R."/>
            <person name="Pearce A.V."/>
            <person name="Pearson D."/>
            <person name="Phillimore B.J.C.T."/>
            <person name="Phillips S.H."/>
            <person name="Plumb R.W."/>
            <person name="Ramsay H."/>
            <person name="Ramsey Y."/>
            <person name="Rogers L."/>
            <person name="Ross M.T."/>
            <person name="Scott C.E."/>
            <person name="Sehra H.K."/>
            <person name="Skuce C.D."/>
            <person name="Smalley S."/>
            <person name="Smith M.L."/>
            <person name="Soderlund C."/>
            <person name="Spragon L."/>
            <person name="Steward C.A."/>
            <person name="Sulston J.E."/>
            <person name="Swann R.M."/>
            <person name="Vaudin M."/>
            <person name="Wall M."/>
            <person name="Wallis J.M."/>
            <person name="Whiteley M.N."/>
            <person name="Willey D.L."/>
            <person name="Williams L."/>
            <person name="Williams S.A."/>
            <person name="Williamson H."/>
            <person name="Wilmer T.E."/>
            <person name="Wilming L."/>
            <person name="Wright C.L."/>
            <person name="Hubbard T."/>
            <person name="Bentley D.R."/>
            <person name="Beck S."/>
            <person name="Rogers J."/>
            <person name="Shimizu N."/>
            <person name="Minoshima S."/>
            <person name="Kawasaki K."/>
            <person name="Sasaki T."/>
            <person name="Asakawa S."/>
            <person name="Kudoh J."/>
            <person name="Shintani A."/>
            <person name="Shibuya K."/>
            <person name="Yoshizaki Y."/>
            <person name="Aoki N."/>
            <person name="Mitsuyama S."/>
            <person name="Roe B.A."/>
            <person name="Chen F."/>
            <person name="Chu L."/>
            <person name="Crabtree J."/>
            <person name="Deschamps S."/>
            <person name="Do A."/>
            <person name="Do T."/>
            <person name="Dorman A."/>
            <person name="Fang F."/>
            <person name="Fu Y."/>
            <person name="Hu P."/>
            <person name="Hua A."/>
            <person name="Kenton S."/>
            <person name="Lai H."/>
            <person name="Lao H.I."/>
            <person name="Lewis J."/>
            <person name="Lewis S."/>
            <person name="Lin S.-P."/>
            <person name="Loh P."/>
            <person name="Malaj E."/>
            <person name="Nguyen T."/>
            <person name="Pan H."/>
            <person name="Phan S."/>
            <person name="Qi S."/>
            <person name="Qian Y."/>
            <person name="Ray L."/>
            <person name="Ren Q."/>
            <person name="Shaull S."/>
            <person name="Sloan D."/>
            <person name="Song L."/>
            <person name="Wang Q."/>
            <person name="Wang Y."/>
            <person name="Wang Z."/>
            <person name="White J."/>
            <person name="Willingham D."/>
            <person name="Wu H."/>
            <person name="Yao Z."/>
            <person name="Zhan M."/>
            <person name="Zhang G."/>
            <person name="Chissoe S."/>
            <person name="Murray J."/>
            <person name="Miller N."/>
            <person name="Minx P."/>
            <person name="Fulton R."/>
            <person name="Johnson D."/>
            <person name="Bemis G."/>
            <person name="Bentley D."/>
            <person name="Bradshaw H."/>
            <person name="Bourne S."/>
            <person name="Cordes M."/>
            <person name="Du Z."/>
            <person name="Fulton L."/>
            <person name="Goela D."/>
            <person name="Graves T."/>
            <person name="Hawkins J."/>
            <person name="Hinds K."/>
            <person name="Kemp K."/>
            <person name="Latreille P."/>
            <person name="Layman D."/>
            <person name="Ozersky P."/>
            <person name="Rohlfing T."/>
            <person name="Scheet P."/>
            <person name="Walker C."/>
            <person name="Wamsley A."/>
            <person name="Wohldmann P."/>
            <person name="Pepin K."/>
            <person name="Nelson J."/>
            <person name="Korf I."/>
            <person name="Bedell J.A."/>
            <person name="Hillier L.W."/>
            <person name="Mardis E."/>
            <person name="Waterston R."/>
            <person name="Wilson R."/>
            <person name="Emanuel B.S."/>
            <person name="Shaikh T."/>
            <person name="Kurahashi H."/>
            <person name="Saitta S."/>
            <person name="Budarf M.L."/>
            <person name="McDermid H.E."/>
            <person name="Johnson A."/>
            <person name="Wong A.C.C."/>
            <person name="Morrow B.E."/>
            <person name="Edelmann L."/>
            <person name="Kim U.J."/>
            <person name="Shizuya H."/>
            <person name="Simon M.I."/>
            <person name="Dumanski J.P."/>
            <person name="Peyrard M."/>
            <person name="Kedra D."/>
            <person name="Seroussi E."/>
            <person name="Fransson I."/>
            <person name="Tapia I."/>
            <person name="Bruder C.E."/>
            <person name="O'Brien K.P."/>
            <person name="Wilkinson P."/>
            <person name="Bodenteich A."/>
            <person name="Hartman K."/>
            <person name="Hu X."/>
            <person name="Khan A.S."/>
            <person name="Lane L."/>
            <person name="Tilahun Y."/>
            <person name="Wright H."/>
        </authorList>
    </citation>
    <scope>NUCLEOTIDE SEQUENCE [LARGE SCALE GENOMIC DNA]</scope>
</reference>
<reference key="2">
    <citation type="journal article" date="2004" name="Genome Res.">
        <title>The status, quality, and expansion of the NIH full-length cDNA project: the Mammalian Gene Collection (MGC).</title>
        <authorList>
            <consortium name="The MGC Project Team"/>
        </authorList>
    </citation>
    <scope>NUCLEOTIDE SEQUENCE [LARGE SCALE MRNA]</scope>
    <source>
        <tissue>Testis</tissue>
    </source>
</reference>
<reference key="3">
    <citation type="journal article" date="2001" name="DNA Res.">
        <title>Identification of novel transcribed sequences on human chromosome 22 by expressed sequence tag mapping.</title>
        <authorList>
            <person name="Hirosawa M."/>
            <person name="Nagase T."/>
            <person name="Murahashi Y."/>
            <person name="Kikuno R."/>
            <person name="Ohara O."/>
        </authorList>
    </citation>
    <scope>NUCLEOTIDE SEQUENCE [LARGE SCALE MRNA] OF 83-140</scope>
    <source>
        <tissue>Brain</tissue>
    </source>
</reference>
<protein>
    <recommendedName>
        <fullName>Coiled-coil domain-containing protein 157</fullName>
    </recommendedName>
</protein>
<comment type="interaction">
    <interactant intactId="EBI-13289565">
        <id>Q569K6</id>
    </interactant>
    <interactant intactId="EBI-12305293">
        <id>Q8NCF5-2</id>
        <label>NFATC2IP</label>
    </interactant>
    <organismsDiffer>false</organismsDiffer>
    <experiments>3</experiments>
</comment>
<comment type="interaction">
    <interactant intactId="EBI-13289565">
        <id>Q569K6</id>
    </interactant>
    <interactant intactId="EBI-710310">
        <id>Q15560</id>
        <label>TCEA2</label>
    </interactant>
    <organismsDiffer>false</organismsDiffer>
    <experiments>3</experiments>
</comment>
<comment type="sequence caution" evidence="3">
    <conflict type="erroneous initiation">
        <sequence resource="EMBL-CDS" id="AAH92419"/>
    </conflict>
    <text>Truncated N-terminus.</text>
</comment>
<comment type="sequence caution" evidence="3">
    <conflict type="miscellaneous discrepancy">
        <sequence resource="EMBL-CDS" id="BAB33326"/>
    </conflict>
    <text>Intron retention. This sequence is incomplete at the 5'- and 3'-ends and extensively differs from that shown due to multiple introns.</text>
</comment>
<gene>
    <name type="primary">CCDC157</name>
    <name type="synonym">KIAA1656</name>
</gene>
<keyword id="KW-0175">Coiled coil</keyword>
<keyword id="KW-1267">Proteomics identification</keyword>
<keyword id="KW-1185">Reference proteome</keyword>